<reference key="1">
    <citation type="submission" date="2005-01" db="EMBL/GenBank/DDBJ databases">
        <authorList>
            <consortium name="NIH - Xenopus Gene Collection (XGC) project"/>
        </authorList>
    </citation>
    <scope>NUCLEOTIDE SEQUENCE [LARGE SCALE MRNA]</scope>
</reference>
<keyword id="KW-0143">Chaperone</keyword>
<keyword id="KW-0472">Membrane</keyword>
<keyword id="KW-1185">Reference proteome</keyword>
<keyword id="KW-0812">Transmembrane</keyword>
<keyword id="KW-1133">Transmembrane helix</keyword>
<comment type="subcellular location">
    <subcellularLocation>
        <location evidence="3">Membrane</location>
        <topology evidence="3">Multi-pass membrane protein</topology>
    </subcellularLocation>
</comment>
<comment type="similarity">
    <text evidence="3">Belongs to the DNAJC25 family.</text>
</comment>
<evidence type="ECO:0000255" key="1"/>
<evidence type="ECO:0000255" key="2">
    <source>
        <dbReference type="PROSITE-ProRule" id="PRU00286"/>
    </source>
</evidence>
<evidence type="ECO:0000305" key="3"/>
<feature type="chain" id="PRO_0000348573" description="DnaJ homolog subfamily C member 25">
    <location>
        <begin position="1"/>
        <end position="368"/>
    </location>
</feature>
<feature type="transmembrane region" description="Helical" evidence="1">
    <location>
        <begin position="25"/>
        <end position="47"/>
    </location>
</feature>
<feature type="transmembrane region" description="Helical" evidence="1">
    <location>
        <begin position="158"/>
        <end position="178"/>
    </location>
</feature>
<feature type="transmembrane region" description="Helical" evidence="1">
    <location>
        <begin position="252"/>
        <end position="272"/>
    </location>
</feature>
<feature type="domain" description="J" evidence="2">
    <location>
        <begin position="57"/>
        <end position="132"/>
    </location>
</feature>
<proteinExistence type="evidence at transcript level"/>
<protein>
    <recommendedName>
        <fullName>DnaJ homolog subfamily C member 25</fullName>
    </recommendedName>
</protein>
<organism>
    <name type="scientific">Xenopus tropicalis</name>
    <name type="common">Western clawed frog</name>
    <name type="synonym">Silurana tropicalis</name>
    <dbReference type="NCBI Taxonomy" id="8364"/>
    <lineage>
        <taxon>Eukaryota</taxon>
        <taxon>Metazoa</taxon>
        <taxon>Chordata</taxon>
        <taxon>Craniata</taxon>
        <taxon>Vertebrata</taxon>
        <taxon>Euteleostomi</taxon>
        <taxon>Amphibia</taxon>
        <taxon>Batrachia</taxon>
        <taxon>Anura</taxon>
        <taxon>Pipoidea</taxon>
        <taxon>Pipidae</taxon>
        <taxon>Xenopodinae</taxon>
        <taxon>Xenopus</taxon>
        <taxon>Silurana</taxon>
    </lineage>
</organism>
<accession>Q5HZT9</accession>
<sequence length="368" mass="43755">MAALGKAEESQGCFGLFLLLPGPSMQPRLFVLVALSVLLLSGRAGALTEGLYCGRQVCYDVLGVSRDASKGDIARAYRQLARKYHPDRYRPGEPPGPDGETRESAQEKFLLVATAYETLKDEETRKDYDYMLDHPEEYYRHYYHYYSRRLAPKVDVRIVILVSVCAISIFQYYSWWSSYNEAINYLATVTKYRIQAMEIAKQQGLLNRTKEKGKNRRSKEEIKSEEEEIIRDIIKNKIDIKGGYQKPQIFDILLFQIILFPYYIFKYISWYVHWIYTFNIQGKEYGEEEKLYLIRRNMKMSQSQFDTLEEHRKNSFLEQKLWIKENYEVYKLEQEEEMKKKMASDPRWKRYRRWMKNEGPGRLTFADD</sequence>
<dbReference type="EMBL" id="BC088889">
    <property type="protein sequence ID" value="AAH88889.1"/>
    <property type="molecule type" value="mRNA"/>
</dbReference>
<dbReference type="RefSeq" id="NP_001011497.1">
    <property type="nucleotide sequence ID" value="NM_001011497.2"/>
</dbReference>
<dbReference type="SMR" id="Q5HZT9"/>
<dbReference type="FunCoup" id="Q5HZT9">
    <property type="interactions" value="767"/>
</dbReference>
<dbReference type="STRING" id="8364.ENSXETP00000020492"/>
<dbReference type="GeneID" id="496999"/>
<dbReference type="KEGG" id="xtr:496999"/>
<dbReference type="AGR" id="Xenbase:XB-GENE-954361"/>
<dbReference type="CTD" id="548645"/>
<dbReference type="Xenbase" id="XB-GENE-954361">
    <property type="gene designation" value="dnajc25"/>
</dbReference>
<dbReference type="InParanoid" id="Q5HZT9"/>
<dbReference type="OMA" id="WFWRYTV"/>
<dbReference type="OrthoDB" id="270167at2759"/>
<dbReference type="Proteomes" id="UP000008143">
    <property type="component" value="Chromosome 1"/>
</dbReference>
<dbReference type="Bgee" id="ENSXETG00000010217">
    <property type="expression patterns" value="Expressed in heart and 15 other cell types or tissues"/>
</dbReference>
<dbReference type="ExpressionAtlas" id="Q5HZT9">
    <property type="expression patterns" value="baseline"/>
</dbReference>
<dbReference type="GO" id="GO:0016020">
    <property type="term" value="C:membrane"/>
    <property type="evidence" value="ECO:0007669"/>
    <property type="project" value="UniProtKB-SubCell"/>
</dbReference>
<dbReference type="GO" id="GO:0006457">
    <property type="term" value="P:protein folding"/>
    <property type="evidence" value="ECO:0007669"/>
    <property type="project" value="InterPro"/>
</dbReference>
<dbReference type="CDD" id="cd06257">
    <property type="entry name" value="DnaJ"/>
    <property type="match status" value="1"/>
</dbReference>
<dbReference type="FunFam" id="1.10.287.110:FF:000036">
    <property type="entry name" value="dnaJ homolog subfamily C member 25"/>
    <property type="match status" value="1"/>
</dbReference>
<dbReference type="Gene3D" id="1.10.287.110">
    <property type="entry name" value="DnaJ domain"/>
    <property type="match status" value="1"/>
</dbReference>
<dbReference type="InterPro" id="IPR001623">
    <property type="entry name" value="DnaJ_domain"/>
</dbReference>
<dbReference type="InterPro" id="IPR044632">
    <property type="entry name" value="DNAJC25-like"/>
</dbReference>
<dbReference type="InterPro" id="IPR036869">
    <property type="entry name" value="J_dom_sf"/>
</dbReference>
<dbReference type="PANTHER" id="PTHR44176">
    <property type="entry name" value="DNAJ HOMOLOG SUBFAMILY C MEMBER 25"/>
    <property type="match status" value="1"/>
</dbReference>
<dbReference type="PANTHER" id="PTHR44176:SF1">
    <property type="entry name" value="DNAJ HOMOLOG SUBFAMILY C MEMBER 25"/>
    <property type="match status" value="1"/>
</dbReference>
<dbReference type="Pfam" id="PF00226">
    <property type="entry name" value="DnaJ"/>
    <property type="match status" value="1"/>
</dbReference>
<dbReference type="PRINTS" id="PR00625">
    <property type="entry name" value="JDOMAIN"/>
</dbReference>
<dbReference type="SMART" id="SM00271">
    <property type="entry name" value="DnaJ"/>
    <property type="match status" value="1"/>
</dbReference>
<dbReference type="SUPFAM" id="SSF46565">
    <property type="entry name" value="Chaperone J-domain"/>
    <property type="match status" value="1"/>
</dbReference>
<dbReference type="PROSITE" id="PS50076">
    <property type="entry name" value="DNAJ_2"/>
    <property type="match status" value="1"/>
</dbReference>
<gene>
    <name type="primary">dnajc25</name>
</gene>
<name>DJC25_XENTR</name>